<organism>
    <name type="scientific">Methanococcus maripaludis (strain C7 / ATCC BAA-1331)</name>
    <dbReference type="NCBI Taxonomy" id="426368"/>
    <lineage>
        <taxon>Archaea</taxon>
        <taxon>Methanobacteriati</taxon>
        <taxon>Methanobacteriota</taxon>
        <taxon>Methanomada group</taxon>
        <taxon>Methanococci</taxon>
        <taxon>Methanococcales</taxon>
        <taxon>Methanococcaceae</taxon>
        <taxon>Methanococcus</taxon>
    </lineage>
</organism>
<gene>
    <name evidence="1" type="primary">nop10</name>
    <name type="ordered locus">MmarC7_0981</name>
</gene>
<feature type="chain" id="PRO_1000047026" description="Ribosome biogenesis protein Nop10">
    <location>
        <begin position="1"/>
        <end position="51"/>
    </location>
</feature>
<comment type="function">
    <text evidence="1">Involved in ribosome biogenesis; more specifically in 18S rRNA pseudouridylation and in cleavage of pre-rRNA.</text>
</comment>
<comment type="similarity">
    <text evidence="1">Belongs to the NOP10 family.</text>
</comment>
<reference key="1">
    <citation type="submission" date="2007-06" db="EMBL/GenBank/DDBJ databases">
        <title>Complete sequence of Methanococcus maripaludis C7.</title>
        <authorList>
            <consortium name="US DOE Joint Genome Institute"/>
            <person name="Copeland A."/>
            <person name="Lucas S."/>
            <person name="Lapidus A."/>
            <person name="Barry K."/>
            <person name="Glavina del Rio T."/>
            <person name="Dalin E."/>
            <person name="Tice H."/>
            <person name="Pitluck S."/>
            <person name="Clum A."/>
            <person name="Schmutz J."/>
            <person name="Larimer F."/>
            <person name="Land M."/>
            <person name="Hauser L."/>
            <person name="Kyrpides N."/>
            <person name="Anderson I."/>
            <person name="Sieprawska-Lupa M."/>
            <person name="Whitman W.B."/>
            <person name="Richardson P."/>
        </authorList>
    </citation>
    <scope>NUCLEOTIDE SEQUENCE [LARGE SCALE GENOMIC DNA]</scope>
    <source>
        <strain>C7 / ATCC BAA-1331</strain>
    </source>
</reference>
<proteinExistence type="inferred from homology"/>
<sequence>MRMKKCPKCGKYTLKDFCSGCNEKSVTIKPPRFSPVDKYGKYRRALKKAKM</sequence>
<dbReference type="EMBL" id="CP000745">
    <property type="protein sequence ID" value="ABR66048.1"/>
    <property type="molecule type" value="Genomic_DNA"/>
</dbReference>
<dbReference type="SMR" id="A6VHX2"/>
<dbReference type="STRING" id="426368.MmarC7_0981"/>
<dbReference type="KEGG" id="mmz:MmarC7_0981"/>
<dbReference type="eggNOG" id="arCOG00906">
    <property type="taxonomic scope" value="Archaea"/>
</dbReference>
<dbReference type="HOGENOM" id="CLU_196480_1_0_2"/>
<dbReference type="OrthoDB" id="7259at2157"/>
<dbReference type="GO" id="GO:1990904">
    <property type="term" value="C:ribonucleoprotein complex"/>
    <property type="evidence" value="ECO:0007669"/>
    <property type="project" value="UniProtKB-KW"/>
</dbReference>
<dbReference type="GO" id="GO:0030515">
    <property type="term" value="F:snoRNA binding"/>
    <property type="evidence" value="ECO:0007669"/>
    <property type="project" value="InterPro"/>
</dbReference>
<dbReference type="GO" id="GO:0001522">
    <property type="term" value="P:pseudouridine synthesis"/>
    <property type="evidence" value="ECO:0007669"/>
    <property type="project" value="InterPro"/>
</dbReference>
<dbReference type="GO" id="GO:0006364">
    <property type="term" value="P:rRNA processing"/>
    <property type="evidence" value="ECO:0007669"/>
    <property type="project" value="UniProtKB-UniRule"/>
</dbReference>
<dbReference type="Gene3D" id="2.20.28.40">
    <property type="entry name" value="H/ACA ribonucleoprotein complex, subunit Nop10"/>
    <property type="match status" value="1"/>
</dbReference>
<dbReference type="HAMAP" id="MF_00803">
    <property type="entry name" value="Nop10"/>
    <property type="match status" value="1"/>
</dbReference>
<dbReference type="InterPro" id="IPR007264">
    <property type="entry name" value="H/ACA_rnp_Nop10"/>
</dbReference>
<dbReference type="InterPro" id="IPR036756">
    <property type="entry name" value="H/ACA_rnp_Nop10_sf"/>
</dbReference>
<dbReference type="InterPro" id="IPR023532">
    <property type="entry name" value="Nop10_arc-typ"/>
</dbReference>
<dbReference type="NCBIfam" id="NF009623">
    <property type="entry name" value="PRK13130.1"/>
    <property type="match status" value="1"/>
</dbReference>
<dbReference type="Pfam" id="PF04135">
    <property type="entry name" value="Nop10p"/>
    <property type="match status" value="1"/>
</dbReference>
<dbReference type="SUPFAM" id="SSF144210">
    <property type="entry name" value="Nop10-like SnoRNP"/>
    <property type="match status" value="1"/>
</dbReference>
<protein>
    <recommendedName>
        <fullName evidence="1">Ribosome biogenesis protein Nop10</fullName>
    </recommendedName>
</protein>
<evidence type="ECO:0000255" key="1">
    <source>
        <dbReference type="HAMAP-Rule" id="MF_00803"/>
    </source>
</evidence>
<name>NOP10_METM7</name>
<keyword id="KW-0687">Ribonucleoprotein</keyword>
<keyword id="KW-0690">Ribosome biogenesis</keyword>
<keyword id="KW-0698">rRNA processing</keyword>
<accession>A6VHX2</accession>